<name>NECT1_HUMAN</name>
<gene>
    <name evidence="29 33" type="primary">NECTIN1</name>
    <name evidence="29" type="synonym">HVEC</name>
    <name evidence="30" type="synonym">PRR1</name>
    <name type="synonym">PVRL1</name>
</gene>
<feature type="signal peptide" evidence="2">
    <location>
        <begin position="1"/>
        <end position="30"/>
    </location>
</feature>
<feature type="chain" id="PRO_0000015133" description="Nectin-1">
    <location>
        <begin position="31"/>
        <end position="517"/>
    </location>
</feature>
<feature type="topological domain" description="Extracellular" evidence="2">
    <location>
        <begin position="31"/>
        <end position="355"/>
    </location>
</feature>
<feature type="transmembrane region" description="Helical" evidence="2">
    <location>
        <begin position="356"/>
        <end position="376"/>
    </location>
</feature>
<feature type="topological domain" description="Cytoplasmic" evidence="2">
    <location>
        <begin position="377"/>
        <end position="517"/>
    </location>
</feature>
<feature type="domain" description="Ig-like V-type">
    <location>
        <begin position="31"/>
        <end position="141"/>
    </location>
</feature>
<feature type="domain" description="Ig-like C2-type 1">
    <location>
        <begin position="149"/>
        <end position="238"/>
    </location>
</feature>
<feature type="domain" description="Ig-like C2-type 2">
    <location>
        <begin position="247"/>
        <end position="334"/>
    </location>
</feature>
<feature type="region of interest" description="Interaction with FGFR" evidence="1">
    <location>
        <begin position="282"/>
        <end position="299"/>
    </location>
</feature>
<feature type="region of interest" description="Disordered" evidence="3">
    <location>
        <begin position="399"/>
        <end position="488"/>
    </location>
</feature>
<feature type="compositionally biased region" description="Acidic residues" evidence="3">
    <location>
        <begin position="436"/>
        <end position="445"/>
    </location>
</feature>
<feature type="compositionally biased region" description="Basic and acidic residues" evidence="3">
    <location>
        <begin position="449"/>
        <end position="466"/>
    </location>
</feature>
<feature type="modified residue" description="Phosphoserine" evidence="36">
    <location>
        <position position="422"/>
    </location>
</feature>
<feature type="modified residue" description="Phosphoserine" evidence="36">
    <location>
        <position position="434"/>
    </location>
</feature>
<feature type="modified residue" description="Phosphoserine" evidence="1">
    <location>
        <position position="435"/>
    </location>
</feature>
<feature type="modified residue" description="Phosphotyrosine" evidence="1">
    <location>
        <position position="436"/>
    </location>
</feature>
<feature type="modified residue" description="Phosphoserine" evidence="1">
    <location>
        <position position="511"/>
    </location>
</feature>
<feature type="glycosylation site" description="N-linked (GlcNAc...) asparagine" evidence="2">
    <location>
        <position position="36"/>
    </location>
</feature>
<feature type="glycosylation site" description="N-linked (GlcNAc...) asparagine" evidence="14">
    <location>
        <position position="72"/>
    </location>
</feature>
<feature type="glycosylation site" description="N-linked (GlcNAc...) asparagine" evidence="14">
    <location>
        <position position="139"/>
    </location>
</feature>
<feature type="glycosylation site" description="N-linked (GlcNAc...) (complex) asparagine" evidence="9 11 14 16">
    <location>
        <position position="202"/>
    </location>
</feature>
<feature type="glycosylation site" description="N-linked (GlcNAc...) asparagine" evidence="2">
    <location>
        <position position="286"/>
    </location>
</feature>
<feature type="glycosylation site" description="N-linked (GlcNAc...) asparagine" evidence="2">
    <location>
        <position position="297"/>
    </location>
</feature>
<feature type="glycosylation site" description="N-linked (GlcNAc...) asparagine" evidence="2">
    <location>
        <position position="307"/>
    </location>
</feature>
<feature type="glycosylation site" description="N-linked (GlcNAc...) asparagine" evidence="12">
    <location>
        <position position="332"/>
    </location>
</feature>
<feature type="disulfide bond" evidence="13 15 16 32 34">
    <location>
        <begin position="51"/>
        <end position="124"/>
    </location>
</feature>
<feature type="disulfide bond" evidence="13 15 16 32 34">
    <location>
        <begin position="172"/>
        <end position="226"/>
    </location>
</feature>
<feature type="disulfide bond" evidence="13 15 16 32 34">
    <location>
        <begin position="269"/>
        <end position="316"/>
    </location>
</feature>
<feature type="splice variant" id="VSP_002624" description="In isoform Gamma." evidence="29">
    <original>EFPYTPSPPEHGRRAGPV</original>
    <variation>AFCQLIYPGKGRTRARMF</variation>
    <location>
        <begin position="335"/>
        <end position="352"/>
    </location>
</feature>
<feature type="splice variant" id="VSP_002626" description="In isoform Alpha." evidence="31">
    <original>FPYTPSPPEHGRRAGPVPTAIIGGVAGSILLVLIVVGGIVVALRRRRHTFKGDYSTKKHVYGNGYSKAGIPQHHPPMAQNLQYPDDSDDEKKAGPLGGSSYEEEEEEEEGGGGGERKVGGPHP</original>
    <variation>KPRPQRGLGSAARLLAGTVAVFLILVAVLTVFFLYNRQQKSPPETDGAGTDQPLSQKPEPSPSRQSSLVPEDIQVVHLDPGRQQQQEEEDLQKLSLQPPYYDLGVSPSYHPSVRTTEPRGECP</variation>
    <location>
        <begin position="336"/>
        <end position="458"/>
    </location>
</feature>
<feature type="splice variant" id="VSP_002625" description="In isoform Gamma." evidence="29">
    <location>
        <begin position="353"/>
        <end position="517"/>
    </location>
</feature>
<feature type="splice variant" id="VSP_002627" description="In isoform Alpha." evidence="31">
    <location>
        <begin position="459"/>
        <end position="517"/>
    </location>
</feature>
<feature type="sequence variant" id="VAR_089834" description="In EDMI." evidence="18">
    <location>
        <begin position="134"/>
        <end position="517"/>
    </location>
</feature>
<feature type="sequence variant" id="VAR_089835" description="In EDMI and OFC7." evidence="5 8">
    <location>
        <begin position="185"/>
        <end position="517"/>
    </location>
</feature>
<feature type="mutagenesis site" description="Does not affect interaction with herpes simplex virus 1/HHV-1 and herpes simplex virus 2/HHV-2 glycoprotein D." evidence="17">
    <original>K</original>
    <variation>A</variation>
    <location>
        <position position="61"/>
    </location>
</feature>
<feature type="mutagenesis site" description="Impaired homophilic interaction in cis and cell adhsion activity; when associated with A-125 and A-133." evidence="13">
    <original>TQ</original>
    <variation>AA</variation>
    <location>
        <begin position="63"/>
        <end position="64"/>
    </location>
</feature>
<feature type="mutagenesis site" description="Does not affect interaction with herpes simplex virus 1/HHV-1 and herpes simplex virus 2/HHV-2 glycoprotein D." evidence="17">
    <original>T</original>
    <variation>A</variation>
    <location>
        <position position="63"/>
    </location>
</feature>
<feature type="mutagenesis site" description="Does not affect interaction with herpes simplex virus 1/HHV-1 and herpes simplex virus 2/HHV-2 glycoprotein D." evidence="17">
    <original>Q</original>
    <variation>A</variation>
    <location>
        <position position="64"/>
    </location>
</feature>
<feature type="mutagenesis site" description="Does not affect interaction with herpes simplex virus 1/HHV-1 and herpes simplex virus 2/HHV-2 glycoprotein D." evidence="17">
    <original>Q</original>
    <variation>A</variation>
    <location>
        <position position="76"/>
    </location>
</feature>
<feature type="mutagenesis site" description="Decreased interaction with herpes simplex virus 1/HHV-1, herpes simplex virus 2/HHV-2 and pseudorabies virus glycoprotein D, leading to decreased cell fusion with the virus." evidence="20">
    <original>N</original>
    <variation>A</variation>
    <location>
        <position position="77"/>
    </location>
</feature>
<feature type="mutagenesis site" description="Decreased interaction with herpes simplex virus 1/HHV-1 and herpes simplex virus 2/HHV-2 glycoprotein D." evidence="17">
    <original>I</original>
    <variation>A</variation>
    <location>
        <position position="80"/>
    </location>
</feature>
<feature type="mutagenesis site" description="Does not affect interaction with herpes simplex virus 1/HHV-1 and herpes simplex virus 2/HHV-2 glycoprotein D." evidence="17">
    <original>N</original>
    <variation>A</variation>
    <location>
        <position position="82"/>
    </location>
</feature>
<feature type="mutagenesis site" description="Impairs interaction with herpes simplex glycoprotein D. Decreases susceptibility to infection by herpes simplex virus." evidence="14">
    <original>N</original>
    <variation>Y</variation>
    <location>
        <position position="82"/>
    </location>
</feature>
<feature type="mutagenesis site" description="Impairs interaction with herpes simplex glycoprotein D. Decreases susceptibility to infection by herpes simplex virus." evidence="14">
    <original>S</original>
    <variation>Y</variation>
    <location>
        <position position="84"/>
    </location>
</feature>
<feature type="mutagenesis site" description="Decreased interaction with herpes simplex virus 1/HHV-1, herpes simplex virus 2/HHV-2 and pseudorabies virus glycoprotein D, leading to decreased cell fusion with the virus." evidence="17 20">
    <original>M</original>
    <variation>A</variation>
    <location>
        <position position="85"/>
    </location>
</feature>
<feature type="mutagenesis site" description="Does not affect interaction with herpes simplex virus 1/HHV-1 and herpes simplex virus 2/HHV-2 glycoprotein D." evidence="17">
    <original>L</original>
    <variation>A</variation>
    <location>
        <position position="90"/>
    </location>
</feature>
<feature type="mutagenesis site" description="Does not affect interaction with herpes simplex virus 1/HHV-1 and herpes simplex virus 2/HHV-2 glycoprotein D. Impaired homophilic interaction in cis and cell adhsion activity; when associated with A-63-64-A and A-133." evidence="13 17">
    <original>E</original>
    <variation>A</variation>
    <location>
        <position position="125"/>
    </location>
</feature>
<feature type="mutagenesis site" description="Abolished interaction with herpes simplex and pseudorabies glycoprotein D. Decreases susceptibility to infection by herpes simplex virus." evidence="14 17 20">
    <original>F</original>
    <variation>A</variation>
    <variation>S</variation>
    <location>
        <position position="129"/>
    </location>
</feature>
<feature type="mutagenesis site" description="Does not affect interaction with herpes simplex virus 1/HHV-1 and herpes simplex virus 2/HHV-2 glycoprotein D." evidence="17">
    <original>P</original>
    <variation>A</variation>
    <location>
        <position position="130"/>
    </location>
</feature>
<feature type="mutagenesis site" description="Does not affect interaction with herpes simplex virus 1/HHV-1 and herpes simplex virus 2/HHV-2 glycoprotein D. Impaired homophilic interaction in cis and cell adhsion activity; when associated with A-63-64-A and A-125." evidence="13 17">
    <original>N</original>
    <variation>A</variation>
    <location>
        <position position="133"/>
    </location>
</feature>
<feature type="strand" evidence="37">
    <location>
        <begin position="37"/>
        <end position="42"/>
    </location>
</feature>
<feature type="strand" evidence="37">
    <location>
        <begin position="47"/>
        <end position="49"/>
    </location>
</feature>
<feature type="strand" evidence="37">
    <location>
        <begin position="61"/>
        <end position="71"/>
    </location>
</feature>
<feature type="strand" evidence="37">
    <location>
        <begin position="74"/>
        <end position="82"/>
    </location>
</feature>
<feature type="turn" evidence="37">
    <location>
        <begin position="83"/>
        <end position="85"/>
    </location>
</feature>
<feature type="strand" evidence="37">
    <location>
        <begin position="86"/>
        <end position="89"/>
    </location>
</feature>
<feature type="turn" evidence="37">
    <location>
        <begin position="94"/>
        <end position="96"/>
    </location>
</feature>
<feature type="strand" evidence="37">
    <location>
        <begin position="97"/>
        <end position="101"/>
    </location>
</feature>
<feature type="strand" evidence="37">
    <location>
        <begin position="103"/>
        <end position="106"/>
    </location>
</feature>
<feature type="strand" evidence="37">
    <location>
        <begin position="109"/>
        <end position="111"/>
    </location>
</feature>
<feature type="helix" evidence="37">
    <location>
        <begin position="116"/>
        <end position="118"/>
    </location>
</feature>
<feature type="strand" evidence="37">
    <location>
        <begin position="120"/>
        <end position="129"/>
    </location>
</feature>
<feature type="strand" evidence="37">
    <location>
        <begin position="132"/>
        <end position="144"/>
    </location>
</feature>
<feature type="strand" evidence="37">
    <location>
        <begin position="147"/>
        <end position="152"/>
    </location>
</feature>
<feature type="strand" evidence="37">
    <location>
        <begin position="157"/>
        <end position="159"/>
    </location>
</feature>
<feature type="strand" evidence="37">
    <location>
        <begin position="167"/>
        <end position="179"/>
    </location>
</feature>
<feature type="strand" evidence="37">
    <location>
        <begin position="182"/>
        <end position="189"/>
    </location>
</feature>
<feature type="strand" evidence="37">
    <location>
        <begin position="192"/>
        <end position="199"/>
    </location>
</feature>
<feature type="strand" evidence="37">
    <location>
        <begin position="205"/>
        <end position="213"/>
    </location>
</feature>
<feature type="helix" evidence="37">
    <location>
        <begin position="217"/>
        <end position="219"/>
    </location>
</feature>
<feature type="strand" evidence="37">
    <location>
        <begin position="223"/>
        <end position="230"/>
    </location>
</feature>
<feature type="strand" evidence="37">
    <location>
        <begin position="233"/>
        <end position="240"/>
    </location>
</feature>
<feature type="strand" evidence="37">
    <location>
        <begin position="243"/>
        <end position="252"/>
    </location>
</feature>
<feature type="strand" evidence="37">
    <location>
        <begin position="265"/>
        <end position="275"/>
    </location>
</feature>
<feature type="strand" evidence="37">
    <location>
        <begin position="279"/>
        <end position="284"/>
    </location>
</feature>
<feature type="strand" evidence="37">
    <location>
        <begin position="293"/>
        <end position="296"/>
    </location>
</feature>
<feature type="strand" evidence="37">
    <location>
        <begin position="299"/>
        <end position="302"/>
    </location>
</feature>
<feature type="helix" evidence="37">
    <location>
        <begin position="308"/>
        <end position="310"/>
    </location>
</feature>
<feature type="strand" evidence="37">
    <location>
        <begin position="312"/>
        <end position="320"/>
    </location>
</feature>
<feature type="strand" evidence="37">
    <location>
        <begin position="323"/>
        <end position="331"/>
    </location>
</feature>
<accession>Q15223</accession>
<accession>O75465</accession>
<accession>Q2M3D3</accession>
<accession>Q9HBE6</accession>
<accession>Q9HBW2</accession>
<dbReference type="EMBL" id="X76400">
    <property type="protein sequence ID" value="CAA53980.2"/>
    <property type="status" value="ALT_INIT"/>
    <property type="molecule type" value="mRNA"/>
</dbReference>
<dbReference type="EMBL" id="AF060231">
    <property type="protein sequence ID" value="AAC23798.1"/>
    <property type="molecule type" value="mRNA"/>
</dbReference>
<dbReference type="EMBL" id="AY029539">
    <property type="protein sequence ID" value="AAK33124.1"/>
    <property type="molecule type" value="mRNA"/>
</dbReference>
<dbReference type="EMBL" id="BC104948">
    <property type="protein sequence ID" value="AAI04949.1"/>
    <property type="molecule type" value="mRNA"/>
</dbReference>
<dbReference type="EMBL" id="BC113471">
    <property type="protein sequence ID" value="AAI13472.1"/>
    <property type="molecule type" value="mRNA"/>
</dbReference>
<dbReference type="EMBL" id="AF252867">
    <property type="protein sequence ID" value="AAG16648.1"/>
    <property type="molecule type" value="Genomic_DNA"/>
</dbReference>
<dbReference type="EMBL" id="AF196768">
    <property type="protein sequence ID" value="AAG16648.1"/>
    <property type="status" value="JOINED"/>
    <property type="molecule type" value="Genomic_DNA"/>
</dbReference>
<dbReference type="EMBL" id="AF196769">
    <property type="protein sequence ID" value="AAG16648.1"/>
    <property type="status" value="JOINED"/>
    <property type="molecule type" value="Genomic_DNA"/>
</dbReference>
<dbReference type="EMBL" id="AF196770">
    <property type="protein sequence ID" value="AAG16648.1"/>
    <property type="status" value="JOINED"/>
    <property type="molecule type" value="Genomic_DNA"/>
</dbReference>
<dbReference type="EMBL" id="AF196771">
    <property type="protein sequence ID" value="AAG16648.1"/>
    <property type="status" value="JOINED"/>
    <property type="molecule type" value="Genomic_DNA"/>
</dbReference>
<dbReference type="EMBL" id="AF196774">
    <property type="protein sequence ID" value="AAG16649.1"/>
    <property type="molecule type" value="Genomic_DNA"/>
</dbReference>
<dbReference type="EMBL" id="AF196768">
    <property type="protein sequence ID" value="AAG16649.1"/>
    <property type="status" value="JOINED"/>
    <property type="molecule type" value="Genomic_DNA"/>
</dbReference>
<dbReference type="EMBL" id="AF196769">
    <property type="protein sequence ID" value="AAG16649.1"/>
    <property type="status" value="JOINED"/>
    <property type="molecule type" value="Genomic_DNA"/>
</dbReference>
<dbReference type="EMBL" id="AF196770">
    <property type="protein sequence ID" value="AAG16649.1"/>
    <property type="status" value="JOINED"/>
    <property type="molecule type" value="Genomic_DNA"/>
</dbReference>
<dbReference type="EMBL" id="AF196771">
    <property type="protein sequence ID" value="AAG16649.1"/>
    <property type="status" value="JOINED"/>
    <property type="molecule type" value="Genomic_DNA"/>
</dbReference>
<dbReference type="EMBL" id="AF196772">
    <property type="protein sequence ID" value="AAG16649.1"/>
    <property type="status" value="JOINED"/>
    <property type="molecule type" value="Genomic_DNA"/>
</dbReference>
<dbReference type="EMBL" id="AF196773">
    <property type="protein sequence ID" value="AAG16649.1"/>
    <property type="status" value="JOINED"/>
    <property type="molecule type" value="Genomic_DNA"/>
</dbReference>
<dbReference type="CCDS" id="CCDS8426.1">
    <molecule id="Q15223-1"/>
</dbReference>
<dbReference type="CCDS" id="CCDS8427.1">
    <molecule id="Q15223-3"/>
</dbReference>
<dbReference type="PIR" id="JC4024">
    <property type="entry name" value="JC4024"/>
</dbReference>
<dbReference type="RefSeq" id="NP_002846.3">
    <molecule id="Q15223-1"/>
    <property type="nucleotide sequence ID" value="NM_002855.4"/>
</dbReference>
<dbReference type="RefSeq" id="NP_976030.1">
    <molecule id="Q15223-2"/>
    <property type="nucleotide sequence ID" value="NM_203285.2"/>
</dbReference>
<dbReference type="RefSeq" id="NP_976031.1">
    <molecule id="Q15223-3"/>
    <property type="nucleotide sequence ID" value="NM_203286.2"/>
</dbReference>
<dbReference type="PDB" id="3ALP">
    <property type="method" value="X-ray"/>
    <property type="resolution" value="2.80 A"/>
    <property type="chains" value="A/B=30-335"/>
</dbReference>
<dbReference type="PDB" id="3SKU">
    <property type="method" value="X-ray"/>
    <property type="resolution" value="4.00 A"/>
    <property type="chains" value="D/E/F=31-345"/>
</dbReference>
<dbReference type="PDB" id="3U82">
    <property type="method" value="X-ray"/>
    <property type="resolution" value="3.16 A"/>
    <property type="chains" value="B=30-335"/>
</dbReference>
<dbReference type="PDB" id="3U83">
    <property type="method" value="X-ray"/>
    <property type="resolution" value="2.50 A"/>
    <property type="chains" value="A=30-335"/>
</dbReference>
<dbReference type="PDB" id="4FMF">
    <property type="method" value="X-ray"/>
    <property type="resolution" value="3.20 A"/>
    <property type="chains" value="A/B/C/D=31-337"/>
</dbReference>
<dbReference type="PDB" id="4MYW">
    <property type="method" value="X-ray"/>
    <property type="resolution" value="3.19 A"/>
    <property type="chains" value="B/D=30-335"/>
</dbReference>
<dbReference type="PDBsum" id="3ALP"/>
<dbReference type="PDBsum" id="3SKU"/>
<dbReference type="PDBsum" id="3U82"/>
<dbReference type="PDBsum" id="3U83"/>
<dbReference type="PDBsum" id="4FMF"/>
<dbReference type="PDBsum" id="4MYW"/>
<dbReference type="SMR" id="Q15223"/>
<dbReference type="BioGRID" id="111776">
    <property type="interactions" value="18"/>
</dbReference>
<dbReference type="CORUM" id="Q15223"/>
<dbReference type="DIP" id="DIP-40302N"/>
<dbReference type="FunCoup" id="Q15223">
    <property type="interactions" value="685"/>
</dbReference>
<dbReference type="IntAct" id="Q15223">
    <property type="interactions" value="18"/>
</dbReference>
<dbReference type="MINT" id="Q15223"/>
<dbReference type="STRING" id="9606.ENSP00000264025"/>
<dbReference type="GlyConnect" id="1536">
    <property type="glycosylation" value="4 N-Linked glycans (3 sites)"/>
</dbReference>
<dbReference type="GlyCosmos" id="Q15223">
    <property type="glycosylation" value="9 sites, 5 glycans"/>
</dbReference>
<dbReference type="GlyGen" id="Q15223">
    <property type="glycosylation" value="12 sites, 13 N-linked glycans (5 sites), 4 O-linked glycans (3 sites)"/>
</dbReference>
<dbReference type="iPTMnet" id="Q15223"/>
<dbReference type="PhosphoSitePlus" id="Q15223"/>
<dbReference type="BioMuta" id="NECTIN1"/>
<dbReference type="DMDM" id="18202503"/>
<dbReference type="jPOST" id="Q15223"/>
<dbReference type="MassIVE" id="Q15223"/>
<dbReference type="PaxDb" id="9606-ENSP00000264025"/>
<dbReference type="PeptideAtlas" id="Q15223"/>
<dbReference type="ProteomicsDB" id="60490">
    <molecule id="Q15223-1"/>
</dbReference>
<dbReference type="ProteomicsDB" id="60491">
    <molecule id="Q15223-2"/>
</dbReference>
<dbReference type="ProteomicsDB" id="60492">
    <molecule id="Q15223-3"/>
</dbReference>
<dbReference type="Antibodypedia" id="4247">
    <property type="antibodies" value="445 antibodies from 37 providers"/>
</dbReference>
<dbReference type="DNASU" id="5818"/>
<dbReference type="Ensembl" id="ENST00000264025.8">
    <molecule id="Q15223-1"/>
    <property type="protein sequence ID" value="ENSP00000264025.3"/>
    <property type="gene ID" value="ENSG00000110400.11"/>
</dbReference>
<dbReference type="Ensembl" id="ENST00000340882.2">
    <molecule id="Q15223-3"/>
    <property type="protein sequence ID" value="ENSP00000345289.2"/>
    <property type="gene ID" value="ENSG00000110400.11"/>
</dbReference>
<dbReference type="GeneID" id="5818"/>
<dbReference type="KEGG" id="hsa:5818"/>
<dbReference type="MANE-Select" id="ENST00000264025.8">
    <property type="protein sequence ID" value="ENSP00000264025.3"/>
    <property type="RefSeq nucleotide sequence ID" value="NM_002855.5"/>
    <property type="RefSeq protein sequence ID" value="NP_002846.3"/>
</dbReference>
<dbReference type="UCSC" id="uc001pwu.2">
    <molecule id="Q15223-1"/>
    <property type="organism name" value="human"/>
</dbReference>
<dbReference type="AGR" id="HGNC:9706"/>
<dbReference type="CTD" id="5818"/>
<dbReference type="DisGeNET" id="5818"/>
<dbReference type="GeneCards" id="NECTIN1"/>
<dbReference type="HGNC" id="HGNC:9706">
    <property type="gene designation" value="NECTIN1"/>
</dbReference>
<dbReference type="HPA" id="ENSG00000110400">
    <property type="expression patterns" value="Tissue enhanced (esophagus, skin)"/>
</dbReference>
<dbReference type="MalaCards" id="NECTIN1"/>
<dbReference type="MIM" id="225060">
    <property type="type" value="phenotype"/>
</dbReference>
<dbReference type="MIM" id="600644">
    <property type="type" value="gene"/>
</dbReference>
<dbReference type="neXtProt" id="NX_Q15223"/>
<dbReference type="OpenTargets" id="ENSG00000110400"/>
<dbReference type="Orphanet" id="141291">
    <property type="disease" value="Cleft lip and alveolus"/>
</dbReference>
<dbReference type="Orphanet" id="199306">
    <property type="disease" value="Cleft lip/palate"/>
</dbReference>
<dbReference type="Orphanet" id="3253">
    <property type="disease" value="Cleft lip/palate-ectodermal dysplasia syndrome"/>
</dbReference>
<dbReference type="Orphanet" id="199302">
    <property type="disease" value="Isolated cleft lip"/>
</dbReference>
<dbReference type="PharmGKB" id="PA34051"/>
<dbReference type="VEuPathDB" id="HostDB:ENSG00000110400"/>
<dbReference type="eggNOG" id="ENOG502QVRJ">
    <property type="taxonomic scope" value="Eukaryota"/>
</dbReference>
<dbReference type="GeneTree" id="ENSGT00940000156933"/>
<dbReference type="HOGENOM" id="CLU_029618_1_2_1"/>
<dbReference type="InParanoid" id="Q15223"/>
<dbReference type="OMA" id="QSCLAPE"/>
<dbReference type="OrthoDB" id="8718740at2759"/>
<dbReference type="PAN-GO" id="Q15223">
    <property type="GO annotations" value="4 GO annotations based on evolutionary models"/>
</dbReference>
<dbReference type="PhylomeDB" id="Q15223"/>
<dbReference type="TreeFam" id="TF331051"/>
<dbReference type="PathwayCommons" id="Q15223"/>
<dbReference type="Reactome" id="R-HSA-418990">
    <property type="pathway name" value="Adherens junctions interactions"/>
</dbReference>
<dbReference type="Reactome" id="R-HSA-420597">
    <property type="pathway name" value="Nectin/Necl trans heterodimerization"/>
</dbReference>
<dbReference type="SignaLink" id="Q15223"/>
<dbReference type="BioGRID-ORCS" id="5818">
    <property type="hits" value="10 hits in 1137 CRISPR screens"/>
</dbReference>
<dbReference type="ChiTaRS" id="NECTIN1">
    <property type="organism name" value="human"/>
</dbReference>
<dbReference type="EvolutionaryTrace" id="Q15223"/>
<dbReference type="GeneWiki" id="PVRL1"/>
<dbReference type="GenomeRNAi" id="5818"/>
<dbReference type="Pharos" id="Q15223">
    <property type="development level" value="Tbio"/>
</dbReference>
<dbReference type="PRO" id="PR:Q15223"/>
<dbReference type="Proteomes" id="UP000005640">
    <property type="component" value="Chromosome 11"/>
</dbReference>
<dbReference type="RNAct" id="Q15223">
    <property type="molecule type" value="protein"/>
</dbReference>
<dbReference type="Bgee" id="ENSG00000110400">
    <property type="expression patterns" value="Expressed in lower esophagus mucosa and 177 other cell types or tissues"/>
</dbReference>
<dbReference type="GO" id="GO:0005912">
    <property type="term" value="C:adherens junction"/>
    <property type="evidence" value="ECO:0000314"/>
    <property type="project" value="BHF-UCL"/>
</dbReference>
<dbReference type="GO" id="GO:0043296">
    <property type="term" value="C:apical junction complex"/>
    <property type="evidence" value="ECO:0007669"/>
    <property type="project" value="Ensembl"/>
</dbReference>
<dbReference type="GO" id="GO:0044291">
    <property type="term" value="C:cell-cell contact zone"/>
    <property type="evidence" value="ECO:0007669"/>
    <property type="project" value="Ensembl"/>
</dbReference>
<dbReference type="GO" id="GO:0030425">
    <property type="term" value="C:dendrite"/>
    <property type="evidence" value="ECO:0007669"/>
    <property type="project" value="Ensembl"/>
</dbReference>
<dbReference type="GO" id="GO:0005576">
    <property type="term" value="C:extracellular region"/>
    <property type="evidence" value="ECO:0007669"/>
    <property type="project" value="UniProtKB-SubCell"/>
</dbReference>
<dbReference type="GO" id="GO:0032584">
    <property type="term" value="C:growth cone membrane"/>
    <property type="evidence" value="ECO:0007669"/>
    <property type="project" value="Ensembl"/>
</dbReference>
<dbReference type="GO" id="GO:0098686">
    <property type="term" value="C:hippocampal mossy fiber to CA3 synapse"/>
    <property type="evidence" value="ECO:0007669"/>
    <property type="project" value="Ensembl"/>
</dbReference>
<dbReference type="GO" id="GO:0016020">
    <property type="term" value="C:membrane"/>
    <property type="evidence" value="ECO:0000304"/>
    <property type="project" value="ProtInc"/>
</dbReference>
<dbReference type="GO" id="GO:0005886">
    <property type="term" value="C:plasma membrane"/>
    <property type="evidence" value="ECO:0000314"/>
    <property type="project" value="UniProtKB"/>
</dbReference>
<dbReference type="GO" id="GO:0048787">
    <property type="term" value="C:presynaptic active zone membrane"/>
    <property type="evidence" value="ECO:0007669"/>
    <property type="project" value="Ensembl"/>
</dbReference>
<dbReference type="GO" id="GO:0030246">
    <property type="term" value="F:carbohydrate binding"/>
    <property type="evidence" value="ECO:0007669"/>
    <property type="project" value="Ensembl"/>
</dbReference>
<dbReference type="GO" id="GO:0098631">
    <property type="term" value="F:cell adhesion mediator activity"/>
    <property type="evidence" value="ECO:0000314"/>
    <property type="project" value="UniProtKB"/>
</dbReference>
<dbReference type="GO" id="GO:0050839">
    <property type="term" value="F:cell adhesion molecule binding"/>
    <property type="evidence" value="ECO:0000353"/>
    <property type="project" value="BHF-UCL"/>
</dbReference>
<dbReference type="GO" id="GO:0015026">
    <property type="term" value="F:coreceptor activity"/>
    <property type="evidence" value="ECO:0000304"/>
    <property type="project" value="ProtInc"/>
</dbReference>
<dbReference type="GO" id="GO:0042802">
    <property type="term" value="F:identical protein binding"/>
    <property type="evidence" value="ECO:0000353"/>
    <property type="project" value="IntAct"/>
</dbReference>
<dbReference type="GO" id="GO:0042803">
    <property type="term" value="F:protein homodimerization activity"/>
    <property type="evidence" value="ECO:0000250"/>
    <property type="project" value="HGNC-UCL"/>
</dbReference>
<dbReference type="GO" id="GO:0044877">
    <property type="term" value="F:protein-containing complex binding"/>
    <property type="evidence" value="ECO:0007669"/>
    <property type="project" value="Ensembl"/>
</dbReference>
<dbReference type="GO" id="GO:0046790">
    <property type="term" value="F:virion binding"/>
    <property type="evidence" value="ECO:0007669"/>
    <property type="project" value="Ensembl"/>
</dbReference>
<dbReference type="GO" id="GO:0001618">
    <property type="term" value="F:virus receptor activity"/>
    <property type="evidence" value="ECO:0000314"/>
    <property type="project" value="UniProtKB"/>
</dbReference>
<dbReference type="GO" id="GO:0007411">
    <property type="term" value="P:axon guidance"/>
    <property type="evidence" value="ECO:0007669"/>
    <property type="project" value="Ensembl"/>
</dbReference>
<dbReference type="GO" id="GO:0007155">
    <property type="term" value="P:cell adhesion"/>
    <property type="evidence" value="ECO:0000303"/>
    <property type="project" value="UniProtKB"/>
</dbReference>
<dbReference type="GO" id="GO:0098609">
    <property type="term" value="P:cell-cell adhesion"/>
    <property type="evidence" value="ECO:0000303"/>
    <property type="project" value="UniProtKB"/>
</dbReference>
<dbReference type="GO" id="GO:0090103">
    <property type="term" value="P:cochlea morphogenesis"/>
    <property type="evidence" value="ECO:0000250"/>
    <property type="project" value="UniProtKB"/>
</dbReference>
<dbReference type="GO" id="GO:0002934">
    <property type="term" value="P:desmosome organization"/>
    <property type="evidence" value="ECO:0007669"/>
    <property type="project" value="Ensembl"/>
</dbReference>
<dbReference type="GO" id="GO:0070166">
    <property type="term" value="P:enamel mineralization"/>
    <property type="evidence" value="ECO:0007669"/>
    <property type="project" value="Ensembl"/>
</dbReference>
<dbReference type="GO" id="GO:0007157">
    <property type="term" value="P:heterophilic cell-cell adhesion via plasma membrane cell adhesion molecules"/>
    <property type="evidence" value="ECO:0000314"/>
    <property type="project" value="UniProtKB"/>
</dbReference>
<dbReference type="GO" id="GO:0007156">
    <property type="term" value="P:homophilic cell adhesion via plasma membrane adhesion molecules"/>
    <property type="evidence" value="ECO:0000314"/>
    <property type="project" value="UniProtKB"/>
</dbReference>
<dbReference type="GO" id="GO:0006955">
    <property type="term" value="P:immune response"/>
    <property type="evidence" value="ECO:0000303"/>
    <property type="project" value="UniProtKB"/>
</dbReference>
<dbReference type="GO" id="GO:0006826">
    <property type="term" value="P:iron ion transport"/>
    <property type="evidence" value="ECO:0007669"/>
    <property type="project" value="Ensembl"/>
</dbReference>
<dbReference type="GO" id="GO:0002089">
    <property type="term" value="P:lens morphogenesis in camera-type eye"/>
    <property type="evidence" value="ECO:0007669"/>
    <property type="project" value="Ensembl"/>
</dbReference>
<dbReference type="GO" id="GO:1902414">
    <property type="term" value="P:protein localization to cell junction"/>
    <property type="evidence" value="ECO:0000318"/>
    <property type="project" value="GO_Central"/>
</dbReference>
<dbReference type="GO" id="GO:0051963">
    <property type="term" value="P:regulation of synapse assembly"/>
    <property type="evidence" value="ECO:0007669"/>
    <property type="project" value="Ensembl"/>
</dbReference>
<dbReference type="GO" id="GO:0060041">
    <property type="term" value="P:retina development in camera-type eye"/>
    <property type="evidence" value="ECO:0007669"/>
    <property type="project" value="Ensembl"/>
</dbReference>
<dbReference type="GO" id="GO:0046718">
    <property type="term" value="P:symbiont entry into host cell"/>
    <property type="evidence" value="ECO:0000314"/>
    <property type="project" value="UniProt"/>
</dbReference>
<dbReference type="CDD" id="cd05890">
    <property type="entry name" value="IgC1_2_Nectin-1_like"/>
    <property type="match status" value="1"/>
</dbReference>
<dbReference type="CDD" id="cd05886">
    <property type="entry name" value="IgV_1_Nectin-1_like"/>
    <property type="match status" value="1"/>
</dbReference>
<dbReference type="FunFam" id="2.60.40.10:FF:000268">
    <property type="entry name" value="Nectin cell adhesion molecule 1"/>
    <property type="match status" value="1"/>
</dbReference>
<dbReference type="FunFam" id="2.60.40.10:FF:000304">
    <property type="entry name" value="Nectin cell adhesion molecule 1"/>
    <property type="match status" value="1"/>
</dbReference>
<dbReference type="FunFam" id="2.60.40.10:FF:000427">
    <property type="entry name" value="Nectin cell adhesion molecule 1"/>
    <property type="match status" value="1"/>
</dbReference>
<dbReference type="Gene3D" id="2.60.40.10">
    <property type="entry name" value="Immunoglobulins"/>
    <property type="match status" value="3"/>
</dbReference>
<dbReference type="InterPro" id="IPR013162">
    <property type="entry name" value="CD80_C2-set"/>
</dbReference>
<dbReference type="InterPro" id="IPR007110">
    <property type="entry name" value="Ig-like_dom"/>
</dbReference>
<dbReference type="InterPro" id="IPR036179">
    <property type="entry name" value="Ig-like_dom_sf"/>
</dbReference>
<dbReference type="InterPro" id="IPR013783">
    <property type="entry name" value="Ig-like_fold"/>
</dbReference>
<dbReference type="InterPro" id="IPR003599">
    <property type="entry name" value="Ig_sub"/>
</dbReference>
<dbReference type="InterPro" id="IPR003598">
    <property type="entry name" value="Ig_sub2"/>
</dbReference>
<dbReference type="InterPro" id="IPR013106">
    <property type="entry name" value="Ig_V-set"/>
</dbReference>
<dbReference type="InterPro" id="IPR041850">
    <property type="entry name" value="Nectin-1_Ig2"/>
</dbReference>
<dbReference type="InterPro" id="IPR041849">
    <property type="entry name" value="Nectin-1_IgV1"/>
</dbReference>
<dbReference type="InterPro" id="IPR051427">
    <property type="entry name" value="Nectin/Nectin-like"/>
</dbReference>
<dbReference type="PANTHER" id="PTHR23277:SF69">
    <property type="entry name" value="NECTIN-1"/>
    <property type="match status" value="1"/>
</dbReference>
<dbReference type="PANTHER" id="PTHR23277">
    <property type="entry name" value="NECTIN-RELATED"/>
    <property type="match status" value="1"/>
</dbReference>
<dbReference type="Pfam" id="PF08205">
    <property type="entry name" value="C2-set_2"/>
    <property type="match status" value="1"/>
</dbReference>
<dbReference type="Pfam" id="PF13927">
    <property type="entry name" value="Ig_3"/>
    <property type="match status" value="1"/>
</dbReference>
<dbReference type="Pfam" id="PF07686">
    <property type="entry name" value="V-set"/>
    <property type="match status" value="1"/>
</dbReference>
<dbReference type="SMART" id="SM00409">
    <property type="entry name" value="IG"/>
    <property type="match status" value="3"/>
</dbReference>
<dbReference type="SMART" id="SM00408">
    <property type="entry name" value="IGc2"/>
    <property type="match status" value="2"/>
</dbReference>
<dbReference type="SMART" id="SM00406">
    <property type="entry name" value="IGv"/>
    <property type="match status" value="1"/>
</dbReference>
<dbReference type="SUPFAM" id="SSF48726">
    <property type="entry name" value="Immunoglobulin"/>
    <property type="match status" value="3"/>
</dbReference>
<dbReference type="PROSITE" id="PS50835">
    <property type="entry name" value="IG_LIKE"/>
    <property type="match status" value="2"/>
</dbReference>
<organism>
    <name type="scientific">Homo sapiens</name>
    <name type="common">Human</name>
    <dbReference type="NCBI Taxonomy" id="9606"/>
    <lineage>
        <taxon>Eukaryota</taxon>
        <taxon>Metazoa</taxon>
        <taxon>Chordata</taxon>
        <taxon>Craniata</taxon>
        <taxon>Vertebrata</taxon>
        <taxon>Euteleostomi</taxon>
        <taxon>Mammalia</taxon>
        <taxon>Eutheria</taxon>
        <taxon>Euarchontoglires</taxon>
        <taxon>Primates</taxon>
        <taxon>Haplorrhini</taxon>
        <taxon>Catarrhini</taxon>
        <taxon>Hominidae</taxon>
        <taxon>Homo</taxon>
    </lineage>
</organism>
<protein>
    <recommendedName>
        <fullName evidence="29">Nectin-1</fullName>
    </recommendedName>
    <alternativeName>
        <fullName evidence="29">Herpes virus entry mediator C</fullName>
        <shortName evidence="29">Herpesvirus entry mediator C</shortName>
        <shortName evidence="29">HveC</shortName>
    </alternativeName>
    <alternativeName>
        <fullName evidence="29">Herpesvirus Ig-like receptor</fullName>
        <shortName evidence="29">HIgR</shortName>
    </alternativeName>
    <alternativeName>
        <fullName evidence="33">Nectin cell adhesion molecule 1</fullName>
    </alternativeName>
    <alternativeName>
        <fullName evidence="30">Poliovirus receptor-related protein 1</fullName>
    </alternativeName>
    <cdAntigenName>CD111</cdAntigenName>
</protein>
<proteinExistence type="evidence at protein level"/>
<sequence>MARMGLAGAAGRWWGLALGLTAFFLPGVHSQVVQVNDSMYGFIGTDVVLHCSFANPLPSVKITQVTWQKSTNGSKQNVAIYNPSMGVSVLAPYRERVEFLRPSFTDGTIRLSRLELEDEGVYICEFATFPTGNRESQLNLTVMAKPTNWIEGTQAVLRAKKGQDDKVLVATCTSANGKPPSVVSWETRLKGEAEYQEIRNPNGTVTVISRYRLVPSREAHQQSLACIVNYHMDRFKESLTLNVQYEPEVTIEGFDGNWYLQRMDVKLTCKADANPPATEYHWTTLNGSLPKGVEAQNRTLFFKGPINYSLAGTYICEATNPIGTRSGQVEVNITEFPYTPSPPEHGRRAGPVPTAIIGGVAGSILLVLIVVGGIVVALRRRRHTFKGDYSTKKHVYGNGYSKAGIPQHHPPMAQNLQYPDDSDDEKKAGPLGGSSYEEEEEEEEGGGGGERKVGGPHPKYDEDAKRPYFTVDEAEARQDGYGDRTLGYQYDPEQLDLAENMVSQNDGSFISKKEWYV</sequence>
<keyword id="KW-0002">3D-structure</keyword>
<keyword id="KW-0025">Alternative splicing</keyword>
<keyword id="KW-0130">Cell adhesion</keyword>
<keyword id="KW-0965">Cell junction</keyword>
<keyword id="KW-1003">Cell membrane</keyword>
<keyword id="KW-0966">Cell projection</keyword>
<keyword id="KW-0225">Disease variant</keyword>
<keyword id="KW-1015">Disulfide bond</keyword>
<keyword id="KW-0038">Ectodermal dysplasia</keyword>
<keyword id="KW-0325">Glycoprotein</keyword>
<keyword id="KW-1183">Host cell receptor for virus entry</keyword>
<keyword id="KW-0945">Host-virus interaction</keyword>
<keyword id="KW-0393">Immunoglobulin domain</keyword>
<keyword id="KW-0472">Membrane</keyword>
<keyword id="KW-0597">Phosphoprotein</keyword>
<keyword id="KW-1267">Proteomics identification</keyword>
<keyword id="KW-0675">Receptor</keyword>
<keyword id="KW-1185">Reference proteome</keyword>
<keyword id="KW-0677">Repeat</keyword>
<keyword id="KW-0964">Secreted</keyword>
<keyword id="KW-0732">Signal</keyword>
<keyword id="KW-0770">Synapse</keyword>
<keyword id="KW-0812">Transmembrane</keyword>
<keyword id="KW-1133">Transmembrane helix</keyword>
<keyword id="KW-0832">Ubl conjugation</keyword>
<evidence type="ECO:0000250" key="1">
    <source>
        <dbReference type="UniProtKB" id="Q9JKF6"/>
    </source>
</evidence>
<evidence type="ECO:0000255" key="2"/>
<evidence type="ECO:0000256" key="3">
    <source>
        <dbReference type="SAM" id="MobiDB-lite"/>
    </source>
</evidence>
<evidence type="ECO:0000269" key="4">
    <source>
    </source>
</evidence>
<evidence type="ECO:0000269" key="5">
    <source>
    </source>
</evidence>
<evidence type="ECO:0000269" key="6">
    <source>
    </source>
</evidence>
<evidence type="ECO:0000269" key="7">
    <source>
    </source>
</evidence>
<evidence type="ECO:0000269" key="8">
    <source>
    </source>
</evidence>
<evidence type="ECO:0000269" key="9">
    <source>
    </source>
</evidence>
<evidence type="ECO:0000269" key="10">
    <source>
    </source>
</evidence>
<evidence type="ECO:0000269" key="11">
    <source>
    </source>
</evidence>
<evidence type="ECO:0000269" key="12">
    <source>
    </source>
</evidence>
<evidence type="ECO:0000269" key="13">
    <source>
    </source>
</evidence>
<evidence type="ECO:0000269" key="14">
    <source>
    </source>
</evidence>
<evidence type="ECO:0000269" key="15">
    <source>
    </source>
</evidence>
<evidence type="ECO:0000269" key="16">
    <source>
    </source>
</evidence>
<evidence type="ECO:0000269" key="17">
    <source>
    </source>
</evidence>
<evidence type="ECO:0000269" key="18">
    <source>
    </source>
</evidence>
<evidence type="ECO:0000269" key="19">
    <source>
    </source>
</evidence>
<evidence type="ECO:0000269" key="20">
    <source>
    </source>
</evidence>
<evidence type="ECO:0000269" key="21">
    <source>
    </source>
</evidence>
<evidence type="ECO:0000269" key="22">
    <source>
    </source>
</evidence>
<evidence type="ECO:0000269" key="23">
    <source>
    </source>
</evidence>
<evidence type="ECO:0000269" key="24">
    <source>
    </source>
</evidence>
<evidence type="ECO:0000269" key="25">
    <source>
    </source>
</evidence>
<evidence type="ECO:0000269" key="26">
    <source>
    </source>
</evidence>
<evidence type="ECO:0000269" key="27">
    <source>
    </source>
</evidence>
<evidence type="ECO:0000269" key="28">
    <source>
    </source>
</evidence>
<evidence type="ECO:0000303" key="29">
    <source>
    </source>
</evidence>
<evidence type="ECO:0000303" key="30">
    <source>
    </source>
</evidence>
<evidence type="ECO:0000305" key="31"/>
<evidence type="ECO:0000305" key="32">
    <source>
    </source>
</evidence>
<evidence type="ECO:0000312" key="33">
    <source>
        <dbReference type="HGNC" id="HGNC:9706"/>
    </source>
</evidence>
<evidence type="ECO:0007744" key="34">
    <source>
        <dbReference type="PDB" id="3ALP"/>
    </source>
</evidence>
<evidence type="ECO:0007744" key="35">
    <source>
        <dbReference type="PDB" id="4MYW"/>
    </source>
</evidence>
<evidence type="ECO:0007744" key="36">
    <source>
    </source>
</evidence>
<evidence type="ECO:0007829" key="37">
    <source>
        <dbReference type="PDB" id="3U83"/>
    </source>
</evidence>
<comment type="function">
    <text evidence="1 13">Cell adhesion molecule that promotes cell-cell contacts and plays important roles in the development of the nervous system (PubMed:21325282). Acts by forming homophilic or heterophilic trans-dimers (PubMed:21325282). Heterophilic interactions have been detected between NECTIN1 and NECTIN3 and between NECTIN1 and NECTIN4 (By similarity). Involved in axon guidance by promoting contacts between the commissural axons and the floor plate cells (By similarity). Involved in synaptogegesis (By similarity). Has some neurite outgrowth-promoting activity (By similarity). Promotes formation of checkerboard-like cellular pattern of hair cells and supporting cells in the auditory epithelium via heterophilic interaction with NECTIN3: NECTIN1 is present in the membrane of hair cells and associates with NECTIN3 on supporting cells, thereby mediating heterotypic adhesion between these two cell types (By similarity). Required for enamel mineralization (By similarity).</text>
</comment>
<comment type="function">
    <text evidence="14 17 19 20 21 22 23 24 25 26 27">(Microbial infection) Acts as a receptor for herpes simplex virus 1/HHV-1, herpes simplex virus 2/HHV-2, and pseudorabies virus/PRV (PubMed:21980294, PubMed:25231300, PubMed:28381567, PubMed:28542478, PubMed:34587223, PubMed:38857290, PubMed:39048823, PubMed:39048830, PubMed:7721102, PubMed:9616127, PubMed:9657005). Constitutes the major receptor for herpes simplex virus 1/HHV-1 entry into host cells (PubMed:34587223).</text>
</comment>
<comment type="subunit">
    <text evidence="1 4 7 10 16">Cis- and trans-homodimer (PubMed:22902367). Can form trans-heterodimers with NECTIN3 and with NECTIN4 (PubMed:11544254). Interaction between NECTIN1 and NECTIN3 on the pre- and postsynaptic sites, respectively, initiates the formation of puncta adherentia junctions between axons and dendrites (PubMed:11544254). Interacts (via cytoplasmic domain) with AFDN (via PDZ domain); this interaction recruits NECTIN1 to cadherin-based adherens junctions and provides a connection with the actin cytoskeleton (PubMed:10225955). Interacts with integrin alphaV/beta3 (PubMed:16679515). Interacts (via Ig-like C2-type domain 2) with FGFR1, FGFR2 and FGFR3 (By similarity).</text>
</comment>
<comment type="subunit">
    <text evidence="14 15 20 27 28">(Microbial infection) Interacts with herpes simplex virus 1/HHV-1, herpes simplex virus 2/HHV-2, and pseudorabies virus/PRV envelope glycoprotein D.</text>
</comment>
<comment type="interaction">
    <interactant intactId="EBI-1771314">
        <id>Q15223</id>
    </interactant>
    <interactant intactId="EBI-2876774">
        <id>Q92520</id>
        <label>FAM3C</label>
    </interactant>
    <organismsDiffer>false</organismsDiffer>
    <experiments>3</experiments>
</comment>
<comment type="interaction">
    <interactant intactId="EBI-1771314">
        <id>Q15223</id>
    </interactant>
    <interactant intactId="EBI-1771314">
        <id>Q15223</id>
        <label>NECTIN1</label>
    </interactant>
    <organismsDiffer>false</organismsDiffer>
    <experiments>4</experiments>
</comment>
<comment type="interaction">
    <interactant intactId="EBI-1771314">
        <id>Q15223</id>
    </interactant>
    <interactant intactId="EBI-2826725">
        <id>Q9NQS3</id>
        <label>NECTIN3</label>
    </interactant>
    <organismsDiffer>false</organismsDiffer>
    <experiments>3</experiments>
</comment>
<comment type="interaction">
    <interactant intactId="EBI-1771314">
        <id>Q15223</id>
    </interactant>
    <interactant intactId="EBI-16007706">
        <id>Q9NQS3-1</id>
        <label>NECTIN3</label>
    </interactant>
    <organismsDiffer>false</organismsDiffer>
    <experiments>3</experiments>
</comment>
<comment type="interaction">
    <interactant intactId="EBI-1771314">
        <id>Q15223</id>
    </interactant>
    <interactant intactId="EBI-4314784">
        <id>Q96NY8</id>
        <label>NECTIN4</label>
    </interactant>
    <organismsDiffer>false</organismsDiffer>
    <experiments>5</experiments>
</comment>
<comment type="interaction">
    <interactant intactId="EBI-1771314">
        <id>Q15223</id>
    </interactant>
    <interactant intactId="EBI-727004">
        <id>O00560</id>
        <label>SDCBP</label>
    </interactant>
    <organismsDiffer>false</organismsDiffer>
    <experiments>8</experiments>
</comment>
<comment type="subcellular location">
    <subcellularLocation>
        <location evidence="6 13 21 22">Cell membrane</location>
        <topology evidence="2">Single-pass type I membrane protein</topology>
    </subcellularLocation>
    <subcellularLocation>
        <location evidence="4">Cell junction</location>
        <location evidence="4">Adherens junction</location>
    </subcellularLocation>
    <subcellularLocation>
        <location evidence="1">Presynaptic cell membrane</location>
        <topology>Single-pass type I membrane protein</topology>
    </subcellularLocation>
    <text evidence="1">In the auditory epithelium, specificaly localizes to the apical side of the lateral membranes of hair cells.</text>
</comment>
<comment type="subcellular location">
    <molecule>Isoform Alpha</molecule>
    <subcellularLocation>
        <location evidence="6">Cell membrane</location>
        <topology evidence="2">Single-pass type I membrane protein</topology>
    </subcellularLocation>
</comment>
<comment type="subcellular location">
    <molecule>Isoform Delta</molecule>
    <subcellularLocation>
        <location evidence="6">Cell membrane</location>
        <topology evidence="2">Single-pass type I membrane protein</topology>
    </subcellularLocation>
</comment>
<comment type="subcellular location">
    <molecule>Isoform Gamma</molecule>
    <subcellularLocation>
        <location evidence="6">Secreted</location>
    </subcellularLocation>
</comment>
<comment type="alternative products">
    <event type="alternative splicing"/>
    <isoform>
        <id>Q15223-1</id>
        <name>Delta</name>
        <sequence type="displayed"/>
    </isoform>
    <isoform>
        <id>Q15223-2</id>
        <name>Alpha</name>
        <sequence type="described" ref="VSP_002626 VSP_002627"/>
    </isoform>
    <isoform>
        <id>Q15223-3</id>
        <name>Gamma</name>
        <sequence type="described" ref="VSP_002624 VSP_002625"/>
    </isoform>
</comment>
<comment type="domain">
    <text evidence="1 13">The Ig-like V-type domain is involved in homophilic interaction in cis, a prerequisite for cell adhesion (PubMed:21325282). Ig-like C2-type 2 mediates neurite outgrowth through binding, induction of phosphorylation, and activation of FGFR (By similarity).</text>
</comment>
<comment type="PTM">
    <text evidence="19">(Microbial infection) Ubiquitinated by CBL following infection by herpes simplex virus 1/HHV-1 and association with HHV-1 envelope glycoprotein D, leading to its removal from cell surface.</text>
</comment>
<comment type="disease" evidence="5 8 18">
    <disease id="DI-00426">
        <name>Ectodermal dysplasia, Margarita Island type</name>
        <acronym>EDMI</acronym>
        <description>An autosomal recessive form of ectodermal dysplasia, a heterogeneous group of disorders due to abnormal development of two or more ectodermal structures. It is a syndrome characterized by the association of cleft lip/palate, ectodermal dysplasia (sparse short and dry scalp hair, sparse eyebrows and eyelashes), and partial syndactyly of the fingers and/or toes. Two thirds of the patients do not manifest oral cleft but present with abnormal teeth and nails.</description>
        <dbReference type="MIM" id="225060"/>
    </disease>
    <text>The disease is caused by variants affecting the gene represented in this entry.</text>
</comment>
<comment type="disease" evidence="5">
    <disease id="DI-00828">
        <name>Non-syndromic orofacial cleft 7</name>
        <acronym>OFC7</acronym>
        <description>A birth defect consisting of cleft lips with or without cleft palate. Cleft lips are associated with cleft palate in two-third of cases. A cleft lip can occur on one or both sides and range in severity from a simple notch in the upper lip to a complete opening in the lip extending into the floor of the nostril and involving the upper gum.</description>
        <dbReference type="MIM" id="225060"/>
    </disease>
    <text>The disease is caused by variants affecting the gene represented in this entry.</text>
</comment>
<comment type="similarity">
    <text evidence="31">Belongs to the nectin family.</text>
</comment>
<comment type="sequence caution" evidence="31">
    <conflict type="erroneous initiation">
        <sequence resource="EMBL-CDS" id="CAA53980"/>
    </conflict>
</comment>
<reference key="1">
    <citation type="journal article" date="1995" name="Gene">
        <title>cDNA characterization and chromosomal localization of a gene related to the poliovirus receptor gene.</title>
        <authorList>
            <person name="Lopez M."/>
            <person name="Eberle F."/>
            <person name="Mattei M.-G."/>
            <person name="Gabert J."/>
            <person name="Bardin F."/>
            <person name="Maroc C."/>
            <person name="Dubreuil P."/>
        </authorList>
    </citation>
    <scope>NUCLEOTIDE SEQUENCE [MRNA] (ISOFORM DELTA)</scope>
    <scope>FUNCTION (MICROBIAL INFECTION)</scope>
</reference>
<reference key="2">
    <citation type="journal article" date="1998" name="Science">
        <title>Entry of alphaherpesviruses mediated by poliovirus receptor-related protein 1 and poliovirus receptor.</title>
        <authorList>
            <person name="Geraghty R.J."/>
            <person name="Krummenacher C."/>
            <person name="Cohen G.H."/>
            <person name="Eisenberg R.J."/>
            <person name="Spear P.G."/>
        </authorList>
    </citation>
    <scope>NUCLEOTIDE SEQUENCE [MRNA] (ISOFORM DELTA)</scope>
    <scope>FUNCTION (MICROBIAL INFECTION)</scope>
</reference>
<reference key="3">
    <citation type="journal article" date="2001" name="J. Virol.">
        <title>Novel, soluble isoform of the herpes simplex virus (HSV) receptor nectin1 (or prr1-HIgR-Hvec) modulates positively and negatively susceptibility to hsv infection.</title>
        <authorList>
            <person name="Lopez M."/>
            <person name="Cocchi F."/>
            <person name="Avitabile E."/>
            <person name="Leclerc A."/>
            <person name="Adelaide J."/>
            <person name="Campadelli-Fjume G."/>
            <person name="Dubreuil P."/>
        </authorList>
    </citation>
    <scope>NUCLEOTIDE SEQUENCE [MRNA] (ISOFORM GAMMA)</scope>
    <scope>SUBCELLULAR LOCATION</scope>
</reference>
<reference key="4">
    <citation type="journal article" date="2004" name="Genome Res.">
        <title>The status, quality, and expansion of the NIH full-length cDNA project: the Mammalian Gene Collection (MGC).</title>
        <authorList>
            <consortium name="The MGC Project Team"/>
        </authorList>
    </citation>
    <scope>NUCLEOTIDE SEQUENCE [LARGE SCALE MRNA] (ISOFORM DELTA)</scope>
    <source>
        <tissue>Brain</tissue>
    </source>
</reference>
<reference key="5">
    <citation type="journal article" date="2000" name="Nat. Genet.">
        <title>Mutations of PVRL1, encoding a cell-cell adhesion molecule/herpesvirus receptor, in cleft lip/palate-ectodermal dysplasia.</title>
        <authorList>
            <person name="Suzuki K."/>
            <person name="Hu D."/>
            <person name="Bustos T."/>
            <person name="Zlotogora J."/>
            <person name="Richieri-Costa A."/>
            <person name="Helms J.A."/>
            <person name="Spritz R.A."/>
        </authorList>
    </citation>
    <scope>NUCLEOTIDE SEQUENCE [GENOMIC DNA] OF 28-517 (ISOFORMS ALPHA AND DELTA)</scope>
    <scope>INVOLVEMENT IN EDMI</scope>
    <scope>INVOLVEMENT IN OFC7</scope>
    <scope>VARIANT OFC7 185-TRP--VAL-517 DEL</scope>
    <scope>VARIANT EDMI 185-TRP--VAL-517 DEL</scope>
</reference>
<reference key="6">
    <citation type="journal article" date="1998" name="J. Virol.">
        <title>Herpes simplex virus glycoprotein D can bind to poliovirus receptor-related protein 1 or herpesvirus entry mediator, two structurally unrelated mediators of virus entry.</title>
        <authorList>
            <person name="Krummenacher C."/>
            <person name="Nicola A.V."/>
            <person name="Whitbeck J.C."/>
            <person name="Lou H."/>
            <person name="Hou W."/>
            <person name="Lambris J.D."/>
            <person name="Geraghty R.J."/>
            <person name="Spear P.G."/>
            <person name="Cohen G.H."/>
            <person name="Eisenberg R.J."/>
        </authorList>
    </citation>
    <scope>FUNCTION (MICROBIAL INFECTION)</scope>
    <scope>INTERACTION WITH HERPES SIMPLEX VIRUS 1/HHV-1 AND HERPES SIMPLEX VIRUS 2/HHV-2 GLYCOPROTEIN D</scope>
</reference>
<reference key="7">
    <citation type="journal article" date="1998" name="Virology">
        <title>A cell surface protein with herpesvirus entry activity (HveB) confers susceptibility to infection by mutants of herpes simplex virus type 1, herpes simplex virus type 2, and pseudorabies virus.</title>
        <authorList>
            <person name="Warner M.S."/>
            <person name="Geraghty R.J."/>
            <person name="Martinez W.M."/>
            <person name="Montgomery R.I."/>
            <person name="Whitbeck J.C."/>
            <person name="Xu R."/>
            <person name="Eisenberg R.J."/>
            <person name="Cohen G.H."/>
            <person name="Spear P.G."/>
        </authorList>
    </citation>
    <scope>FUNCTION (MICROBIAL INFECTION)</scope>
    <scope>INTERACTION WITH HERPES SIMPLEX VIRUS 1/HHV-1; HERPES SIMPLEX VIRUS 2/HHV-2 GLYCOPROTEIN D AND PSEUDORABIES VIRUS GLYCOPROTEIN D</scope>
</reference>
<reference key="8">
    <citation type="journal article" date="1999" name="J. Cell Biol.">
        <title>Nectin/PRR: an immunoglobulin-like cell adhesion molecule recruited to cadherin-based adherens junctions through interaction with Afadin, a PDZ domain-containing protein.</title>
        <authorList>
            <person name="Takahashi K."/>
            <person name="Nakanishi H."/>
            <person name="Miyahara M."/>
            <person name="Mandai K."/>
            <person name="Satoh K."/>
            <person name="Satoh A."/>
            <person name="Nishioka H."/>
            <person name="Aoki J."/>
            <person name="Nomoto A."/>
            <person name="Mizoguchi A."/>
            <person name="Takai Y."/>
        </authorList>
    </citation>
    <scope>SUBCELLULAR LOCATION</scope>
    <scope>INTERACTION WITH AFDN</scope>
</reference>
<reference key="9">
    <citation type="journal article" date="2001" name="J. Biol. Chem.">
        <title>Nectin4/PRR4, a new afadin-associated member of the nectin family that trans-interacts with nectin1/PRR1 through V domain interaction.</title>
        <authorList>
            <person name="Reymond N."/>
            <person name="Fabre S."/>
            <person name="Lecocq E."/>
            <person name="Adelaide J."/>
            <person name="Dubreuil P."/>
            <person name="Lopez M."/>
        </authorList>
    </citation>
    <scope>INTERACTION WITH NECTIN3 AND NECTIN4</scope>
</reference>
<reference key="10">
    <citation type="journal article" date="2005" name="J. Proteome Res.">
        <title>Human plasma N-glycoproteome analysis by immunoaffinity subtraction, hydrazide chemistry, and mass spectrometry.</title>
        <authorList>
            <person name="Liu T."/>
            <person name="Qian W.-J."/>
            <person name="Gritsenko M.A."/>
            <person name="Camp D.G. II"/>
            <person name="Monroe M.E."/>
            <person name="Moore R.J."/>
            <person name="Smith R.D."/>
        </authorList>
    </citation>
    <scope>GLYCOSYLATION [LARGE SCALE ANALYSIS] AT ASN-202</scope>
    <source>
        <tissue>Plasma</tissue>
    </source>
</reference>
<reference key="11">
    <citation type="journal article" date="2006" name="J. Biol. Chem.">
        <title>Interaction of integrin alpha(v)beta3 with nectin. Implication in cross-talk between cell-matrix and cell-cell junctions.</title>
        <authorList>
            <person name="Sakamoto Y."/>
            <person name="Ogita H."/>
            <person name="Hirota T."/>
            <person name="Kawakatsu T."/>
            <person name="Fukuyama T."/>
            <person name="Yasumi M."/>
            <person name="Kanzaki N."/>
            <person name="Ozaki M."/>
            <person name="Takai Y."/>
        </authorList>
    </citation>
    <scope>INTERACTION WITH INTEGRIN ITGAV/ITGB3</scope>
</reference>
<reference key="12">
    <citation type="journal article" date="2009" name="Mol. Cell. Proteomics">
        <title>A strategy for precise and large scale identification of core fucosylated glycoproteins.</title>
        <authorList>
            <person name="Jia W."/>
            <person name="Lu Z."/>
            <person name="Fu Y."/>
            <person name="Wang H.P."/>
            <person name="Wang L.H."/>
            <person name="Chi H."/>
            <person name="Yuan Z.F."/>
            <person name="Zheng Z.B."/>
            <person name="Song L.N."/>
            <person name="Han H.H."/>
            <person name="Liang Y.M."/>
            <person name="Wang J.L."/>
            <person name="Cai Y."/>
            <person name="Zhang Y.K."/>
            <person name="Deng Y.L."/>
            <person name="Ying W.T."/>
            <person name="He S.M."/>
            <person name="Qian X.H."/>
        </authorList>
    </citation>
    <scope>GLYCOSYLATION AT ASN-202</scope>
</reference>
<reference key="13">
    <citation type="journal article" date="2009" name="Nat. Biotechnol.">
        <title>Mass-spectrometric identification and relative quantification of N-linked cell surface glycoproteins.</title>
        <authorList>
            <person name="Wollscheid B."/>
            <person name="Bausch-Fluck D."/>
            <person name="Henderson C."/>
            <person name="O'Brien R."/>
            <person name="Bibel M."/>
            <person name="Schiess R."/>
            <person name="Aebersold R."/>
            <person name="Watts J.D."/>
        </authorList>
    </citation>
    <scope>GLYCOSYLATION [LARGE SCALE ANALYSIS] AT ASN-332</scope>
    <source>
        <tissue>Leukemic T-cell</tissue>
    </source>
</reference>
<reference key="14">
    <citation type="journal article" date="2009" name="Sci. Signal.">
        <title>Quantitative phosphoproteomic analysis of T cell receptor signaling reveals system-wide modulation of protein-protein interactions.</title>
        <authorList>
            <person name="Mayya V."/>
            <person name="Lundgren D.H."/>
            <person name="Hwang S.-I."/>
            <person name="Rezaul K."/>
            <person name="Wu L."/>
            <person name="Eng J.K."/>
            <person name="Rodionov V."/>
            <person name="Han D.K."/>
        </authorList>
    </citation>
    <scope>IDENTIFICATION BY MASS SPECTROMETRY [LARGE SCALE ANALYSIS]</scope>
    <source>
        <tissue>Leukemic T-cell</tissue>
    </source>
</reference>
<reference key="15">
    <citation type="journal article" date="2011" name="Sci. Signal.">
        <title>System-wide temporal characterization of the proteome and phosphoproteome of human embryonic stem cell differentiation.</title>
        <authorList>
            <person name="Rigbolt K.T."/>
            <person name="Prokhorova T.A."/>
            <person name="Akimov V."/>
            <person name="Henningsen J."/>
            <person name="Johansen P.T."/>
            <person name="Kratchmarova I."/>
            <person name="Kassem M."/>
            <person name="Mann M."/>
            <person name="Olsen J.V."/>
            <person name="Blagoev B."/>
        </authorList>
    </citation>
    <scope>PHOSPHORYLATION [LARGE SCALE ANALYSIS] AT SER-422 AND SER-434</scope>
    <scope>IDENTIFICATION BY MASS SPECTROMETRY [LARGE SCALE ANALYSIS]</scope>
</reference>
<reference key="16">
    <citation type="journal article" date="2014" name="J. Proteomics">
        <title>An enzyme assisted RP-RPLC approach for in-depth analysis of human liver phosphoproteome.</title>
        <authorList>
            <person name="Bian Y."/>
            <person name="Song C."/>
            <person name="Cheng K."/>
            <person name="Dong M."/>
            <person name="Wang F."/>
            <person name="Huang J."/>
            <person name="Sun D."/>
            <person name="Wang L."/>
            <person name="Ye M."/>
            <person name="Zou H."/>
        </authorList>
    </citation>
    <scope>IDENTIFICATION BY MASS SPECTROMETRY [LARGE SCALE ANALYSIS]</scope>
    <source>
        <tissue>Liver</tissue>
    </source>
</reference>
<reference key="17">
    <citation type="journal article" date="2017" name="J. Virol.">
        <title>Cbl E3 Ligase Mediates the Removal of Nectin-1 from the Surface of Herpes Simplex Virus 1-Infected Cells.</title>
        <authorList>
            <person name="Deschamps T."/>
            <person name="Dogrammatzis C."/>
            <person name="Mullick R."/>
            <person name="Kalamvoki M."/>
        </authorList>
    </citation>
    <scope>FUNCTION (MICROBIAL INFECTION)</scope>
    <scope>UBIQUITINATION</scope>
</reference>
<reference key="18">
    <citation type="journal article" date="2017" name="PLoS Pathog.">
        <title>Structural basis of nectin-1 recognition by pseudorabies virus glycoprotein D.</title>
        <authorList>
            <person name="Li A."/>
            <person name="Lu G."/>
            <person name="Qi J."/>
            <person name="Wu L."/>
            <person name="Tian K."/>
            <person name="Luo T."/>
            <person name="Shi Y."/>
            <person name="Yan J."/>
            <person name="Gao G.F."/>
        </authorList>
    </citation>
    <scope>FUNCTION (MICROBIAL INFECTION)</scope>
    <scope>MUTAGENESIS OF ASN-77; MET-85 AND PHE-129</scope>
</reference>
<reference key="19">
    <citation type="journal article" date="2021" name="PLoS Pathog.">
        <title>Cell-to-cell transmission of HSV1 in human keratinocytes in the absence of the major entry receptor, nectin1.</title>
        <authorList>
            <person name="Kite J."/>
            <person name="Russell T."/>
            <person name="Jones J."/>
            <person name="Elliott G."/>
        </authorList>
    </citation>
    <scope>FUNCTION (MICROBIAL INFECTION)</scope>
    <scope>SUBCELLULAR LOCATION</scope>
</reference>
<reference key="20">
    <citation type="journal article" date="2024" name="Nature">
        <title>TMEFF1 is a neuron-specific restriction factor for herpes simplex virus.</title>
        <authorList>
            <person name="Dai Y."/>
            <person name="Idorn M."/>
            <person name="Serrero M.C."/>
            <person name="Pan X."/>
            <person name="Thomsen E.A."/>
            <person name="Narita R."/>
            <person name="Maimaitili M."/>
            <person name="Qian X."/>
            <person name="Iversen M.B."/>
            <person name="Reinert L.S."/>
            <person name="Flygaard R.K."/>
            <person name="Chen M."/>
            <person name="Ding X."/>
            <person name="Zhang B.C."/>
            <person name="Carter-Timofte M.E."/>
            <person name="Lu Q."/>
            <person name="Jiang Z."/>
            <person name="Zhong Y."/>
            <person name="Zhang S."/>
            <person name="Da L."/>
            <person name="Zhu J."/>
            <person name="Denham M."/>
            <person name="Nissen P."/>
            <person name="Mogensen T.H."/>
            <person name="Mikkelsen J.G."/>
            <person name="Zhang S.Y."/>
            <person name="Casanova J.L."/>
            <person name="Cai Y."/>
            <person name="Paludan S.R."/>
        </authorList>
    </citation>
    <scope>FUNCTION (MICROBIAL INFECTION)</scope>
</reference>
<reference key="21">
    <citation type="journal article" date="2024" name="Nature">
        <title>Human TMEFF1 is a restriction factor for herpes simplex virus in the brain.</title>
        <authorList>
            <person name="Chan Y.H."/>
            <person name="Liu Z."/>
            <person name="Bastard P."/>
            <person name="Khobrekar N."/>
            <person name="Hutchison K.M."/>
            <person name="Yamazaki Y."/>
            <person name="Fan Q."/>
            <person name="Matuozzo D."/>
            <person name="Harschnitz O."/>
            <person name="Kerrouche N."/>
            <person name="Nakajima K."/>
            <person name="Amin P."/>
            <person name="Yatim A."/>
            <person name="Rinchai D."/>
            <person name="Chen J."/>
            <person name="Zhang P."/>
            <person name="Ciceri G."/>
            <person name="Chen J."/>
            <person name="Dobbs K."/>
            <person name="Belkaya S."/>
            <person name="Lee D."/>
            <person name="Gervais A."/>
            <person name="Aydin K."/>
            <person name="Kartal A."/>
            <person name="Hasek M.L."/>
            <person name="Zhao S."/>
            <person name="Reino E.G."/>
            <person name="Lee Y.S."/>
            <person name="Seeleuthner Y."/>
            <person name="Chaldebas M."/>
            <person name="Bailey R."/>
            <person name="Vanhulle C."/>
            <person name="Lorenzo L."/>
            <person name="Boucherit S."/>
            <person name="Rozenberg F."/>
            <person name="Marr N."/>
            <person name="Mogensen T.H."/>
            <person name="Aubart M."/>
            <person name="Cobat A."/>
            <person name="Dulac O."/>
            <person name="Emiroglu M."/>
            <person name="Paludan S.R."/>
            <person name="Abel L."/>
            <person name="Notarangelo L."/>
            <person name="Longnecker R."/>
            <person name="Smith G."/>
            <person name="Studer L."/>
            <person name="Casanova J.L."/>
            <person name="Zhang S.Y."/>
        </authorList>
    </citation>
    <scope>FUNCTION (MICROBIAL INFECTION)</scope>
</reference>
<reference key="22">
    <citation type="journal article" date="2024" name="PLoS Pathog.">
        <title>Herpes simplex virus spreads rapidly in human foreskin, partly driven by chemokine-induced redistribution of Nectin-1 on keratinocytes.</title>
        <authorList>
            <person name="Rana H."/>
            <person name="Truong N.R."/>
            <person name="Johnson B."/>
            <person name="Baharlou H."/>
            <person name="Herbert J.J."/>
            <person name="Kandasamy S."/>
            <person name="Goddard R."/>
            <person name="Cohen R.C."/>
            <person name="Wines M."/>
            <person name="Nasr N."/>
            <person name="Harman A.N."/>
            <person name="Bertram K.M."/>
            <person name="Sandgren K.J."/>
            <person name="Cunningham A.L."/>
        </authorList>
    </citation>
    <scope>FUNCTION (MICROBIAL INFECTION)</scope>
    <scope>SUBCELLULAR LOCATION</scope>
</reference>
<reference evidence="34" key="23">
    <citation type="journal article" date="2011" name="J. Biol. Chem.">
        <title>Crystal Structure of the cis-Dimer of Nectin-1: implications for the architecture of cell-cell junctions.</title>
        <authorList>
            <person name="Narita H."/>
            <person name="Yamamoto Y."/>
            <person name="Suzuki M."/>
            <person name="Miyazaki N."/>
            <person name="Yoshida A."/>
            <person name="Kawai K."/>
            <person name="Iwasaki K."/>
            <person name="Nakagawa A."/>
            <person name="Takai Y."/>
            <person name="Sakisaka T."/>
        </authorList>
    </citation>
    <scope>X-RAY CRYSTALLOGRAPHY (2.80 ANGSTROMS) OF 30-335</scope>
    <scope>FUNCTION</scope>
    <scope>SUBCELLULAR LOCATION</scope>
    <scope>DISULFIDE BONDS</scope>
    <scope>MUTAGENESIS OF 63-THR-GLN-64; GLU-125 AND ASN-133</scope>
</reference>
<reference key="24">
    <citation type="journal article" date="2011" name="Nat. Commun.">
        <title>Binding of herpes simplex virus glycoprotein D to nectin-1 exploits host cell adhesion.</title>
        <authorList>
            <person name="Zhang N."/>
            <person name="Yan J."/>
            <person name="Lu G."/>
            <person name="Guo Z."/>
            <person name="Fan Z."/>
            <person name="Wang J."/>
            <person name="Shi Y."/>
            <person name="Qi J."/>
            <person name="Gao G.F."/>
        </authorList>
    </citation>
    <scope>X-RAY CRYSTALLOGRAPHY (2.5 ANGSTROMS) OF 30-335 IN COMPLEX WITH HERPES SIMPLEX VIRUS GLYCOPROTEIN D</scope>
    <scope>SUBUNIT</scope>
    <scope>DISULFIDE BONDS</scope>
</reference>
<reference key="25">
    <citation type="journal article" date="2011" name="PLoS Pathog.">
        <title>Structure of herpes simplex virus glycoprotein D bound to the human receptor nectin-1.</title>
        <authorList>
            <person name="Di Giovine P."/>
            <person name="Settembre E.C."/>
            <person name="Bhargava A.K."/>
            <person name="Luftig M.A."/>
            <person name="Lou H."/>
            <person name="Cohen G.H."/>
            <person name="Eisenberg R.J."/>
            <person name="Krummenacher C."/>
            <person name="Carfi A."/>
        </authorList>
    </citation>
    <scope>X-RAY CRYSTALLOGRAPHY (4.0 ANGSTROMS) OF 31-345 IN COMPLEX WITH HERPES SIMPLEX VIRUS GLYCOPROTEIN D</scope>
    <scope>FUNCTION (MICROBIAL INFECTION)</scope>
    <scope>SUBUNIT</scope>
    <scope>MUTAGENESIS OF ASN-82; SER-84 AND PHE-129</scope>
    <scope>DISULFIDE BONDS</scope>
    <scope>GLYCOSYLATION AT ASN-72; ASN-139 AND ASN-202</scope>
</reference>
<reference key="26">
    <citation type="journal article" date="2012" name="Nat. Struct. Mol. Biol.">
        <title>Nectin ectodomain structures reveal a canonical adhesive interface.</title>
        <authorList>
            <person name="Harrison O.J."/>
            <person name="Vendome J."/>
            <person name="Brasch J."/>
            <person name="Jin X."/>
            <person name="Hong S."/>
            <person name="Katsamba P.S."/>
            <person name="Ahlsen G."/>
            <person name="Troyanovsky R.B."/>
            <person name="Troyanovsky S.M."/>
            <person name="Honig B."/>
            <person name="Shapiro L."/>
        </authorList>
    </citation>
    <scope>X-RAY CRYSTALLOGRAPHY (3.2 ANGSTROMS) OF 31-337</scope>
    <scope>SUBUNIT</scope>
    <scope>GLYCOSYLATION AT ASN-202</scope>
    <scope>DISULFIDE BONDS</scope>
    <scope>IDENTIFICATION BY MASS SPECTROMETRY</scope>
</reference>
<reference evidence="35" key="27">
    <citation type="journal article" date="2014" name="J. Virol.">
        <title>Crystal structure of herpes simplex virus 2 gD bound to nectin-1 reveals a conserved mode of receptor recognition.</title>
        <authorList>
            <person name="Lu G."/>
            <person name="Zhang N."/>
            <person name="Qi J."/>
            <person name="Li Y."/>
            <person name="Chen Z."/>
            <person name="Zheng C."/>
            <person name="Gao G.F."/>
            <person name="Yan J."/>
        </authorList>
    </citation>
    <scope>X-RAY CRYSTALLOGRAPHY (1.80 ANGSTROMS) OF 30-335 IN COMPLEX WITH HERPES SIMPLEX VIRUS GLYCOPROTEIN D</scope>
    <scope>FUNCTION (MICROBIAL INFECTION)</scope>
    <scope>MUTAGENESIS OF LYS-61; THR-63; GLN-64; GLN-76; ASN-77; ILE-80; ASN-82; MET-85; LEU-90; GLU-125; PHE-129; PRO-130 AND ASN-133</scope>
</reference>
<reference key="28">
    <citation type="journal article" date="2001" name="Nat. Genet.">
        <title>Mutation of PVRL1 is associated with sporadic, non-syndromic cleft lip/palate in northern Venezuela.</title>
        <authorList>
            <person name="Soezen M.A."/>
            <person name="Suzuki K."/>
            <person name="Tolarova M.M."/>
            <person name="Bustos T."/>
            <person name="Fernandez Iglesias J.E."/>
            <person name="Spritz R.A."/>
        </authorList>
    </citation>
    <scope>VARIANT EDMI 185-TRP--VAL-517 DEL</scope>
</reference>
<reference key="29">
    <citation type="journal article" date="2015" name="J. Dermatol.">
        <title>Novel homozygous mutation, c.400C&gt;T (p.Arg134*), in the PVRL1 gene underlies cleft lip/palate-ectodermal dysplasia syndrome in an Asian patient.</title>
        <authorList>
            <person name="Yoshida K."/>
            <person name="Hayashi R."/>
            <person name="Fujita H."/>
            <person name="Kubota M."/>
            <person name="Kondo M."/>
            <person name="Shimomura Y."/>
            <person name="Niizeki H."/>
        </authorList>
    </citation>
    <scope>VARIANT EDMI 134-ARG--VAL-517 DEL</scope>
</reference>